<protein>
    <recommendedName>
        <fullName evidence="1">Large ribosomal subunit protein uL5</fullName>
    </recommendedName>
    <alternativeName>
        <fullName evidence="2">50S ribosomal protein L5</fullName>
    </alternativeName>
</protein>
<keyword id="KW-0687">Ribonucleoprotein</keyword>
<keyword id="KW-0689">Ribosomal protein</keyword>
<keyword id="KW-0694">RNA-binding</keyword>
<keyword id="KW-0699">rRNA-binding</keyword>
<keyword id="KW-0820">tRNA-binding</keyword>
<reference key="1">
    <citation type="journal article" date="2007" name="Microbiology">
        <title>Comparative analysis of the Corynebacterium glutamicum group and complete genome sequence of strain R.</title>
        <authorList>
            <person name="Yukawa H."/>
            <person name="Omumasaba C.A."/>
            <person name="Nonaka H."/>
            <person name="Kos P."/>
            <person name="Okai N."/>
            <person name="Suzuki N."/>
            <person name="Suda M."/>
            <person name="Tsuge Y."/>
            <person name="Watanabe J."/>
            <person name="Ikeda Y."/>
            <person name="Vertes A.A."/>
            <person name="Inui M."/>
        </authorList>
    </citation>
    <scope>NUCLEOTIDE SEQUENCE [LARGE SCALE GENOMIC DNA]</scope>
    <source>
        <strain>R</strain>
    </source>
</reference>
<feature type="chain" id="PRO_1000052725" description="Large ribosomal subunit protein uL5">
    <location>
        <begin position="1"/>
        <end position="191"/>
    </location>
</feature>
<sequence length="191" mass="21789">MTENYIPRLKTRYQDEIRTKLQGEFEFENVMQIPGVTKIVVNMGVGDAARDSKLINGAIEDLTAITGQKPQLRRAKKSIANFKLREGMPIGAKVTLRGDRMWEFLDRLLTVALPRIRDFRGLSDQQFDGHGNYTFGLTEQTMFYEIDVDKIDRPRGMDITVVTTAVTDDEGRSLLRELGFPFKGEDGNRQQ</sequence>
<gene>
    <name evidence="1" type="primary">rplE</name>
    <name type="ordered locus">cgR_0622</name>
</gene>
<proteinExistence type="inferred from homology"/>
<name>RL5_CORGB</name>
<comment type="function">
    <text evidence="1">This is one of the proteins that bind and probably mediate the attachment of the 5S RNA into the large ribosomal subunit, where it forms part of the central protuberance. In the 70S ribosome it contacts protein S13 of the 30S subunit (bridge B1b), connecting the 2 subunits; this bridge is implicated in subunit movement. Contacts the P site tRNA; the 5S rRNA and some of its associated proteins might help stabilize positioning of ribosome-bound tRNAs.</text>
</comment>
<comment type="subunit">
    <text evidence="1">Part of the 50S ribosomal subunit; part of the 5S rRNA/L5/L18/L25 subcomplex. Contacts the 5S rRNA and the P site tRNA. Forms a bridge to the 30S subunit in the 70S ribosome.</text>
</comment>
<comment type="similarity">
    <text evidence="1">Belongs to the universal ribosomal protein uL5 family.</text>
</comment>
<organism>
    <name type="scientific">Corynebacterium glutamicum (strain R)</name>
    <dbReference type="NCBI Taxonomy" id="340322"/>
    <lineage>
        <taxon>Bacteria</taxon>
        <taxon>Bacillati</taxon>
        <taxon>Actinomycetota</taxon>
        <taxon>Actinomycetes</taxon>
        <taxon>Mycobacteriales</taxon>
        <taxon>Corynebacteriaceae</taxon>
        <taxon>Corynebacterium</taxon>
    </lineage>
</organism>
<evidence type="ECO:0000255" key="1">
    <source>
        <dbReference type="HAMAP-Rule" id="MF_01333"/>
    </source>
</evidence>
<evidence type="ECO:0000305" key="2"/>
<dbReference type="EMBL" id="AP009044">
    <property type="protein sequence ID" value="BAF53593.1"/>
    <property type="molecule type" value="Genomic_DNA"/>
</dbReference>
<dbReference type="RefSeq" id="WP_003854317.1">
    <property type="nucleotide sequence ID" value="NC_009342.1"/>
</dbReference>
<dbReference type="SMR" id="A4QBJ6"/>
<dbReference type="GeneID" id="1021523"/>
<dbReference type="KEGG" id="cgt:cgR_0622"/>
<dbReference type="HOGENOM" id="CLU_061015_2_1_11"/>
<dbReference type="PhylomeDB" id="A4QBJ6"/>
<dbReference type="Proteomes" id="UP000006698">
    <property type="component" value="Chromosome"/>
</dbReference>
<dbReference type="GO" id="GO:1990904">
    <property type="term" value="C:ribonucleoprotein complex"/>
    <property type="evidence" value="ECO:0007669"/>
    <property type="project" value="UniProtKB-KW"/>
</dbReference>
<dbReference type="GO" id="GO:0005840">
    <property type="term" value="C:ribosome"/>
    <property type="evidence" value="ECO:0007669"/>
    <property type="project" value="UniProtKB-KW"/>
</dbReference>
<dbReference type="GO" id="GO:0019843">
    <property type="term" value="F:rRNA binding"/>
    <property type="evidence" value="ECO:0007669"/>
    <property type="project" value="UniProtKB-UniRule"/>
</dbReference>
<dbReference type="GO" id="GO:0003735">
    <property type="term" value="F:structural constituent of ribosome"/>
    <property type="evidence" value="ECO:0007669"/>
    <property type="project" value="InterPro"/>
</dbReference>
<dbReference type="GO" id="GO:0000049">
    <property type="term" value="F:tRNA binding"/>
    <property type="evidence" value="ECO:0007669"/>
    <property type="project" value="UniProtKB-UniRule"/>
</dbReference>
<dbReference type="GO" id="GO:0006412">
    <property type="term" value="P:translation"/>
    <property type="evidence" value="ECO:0007669"/>
    <property type="project" value="UniProtKB-UniRule"/>
</dbReference>
<dbReference type="FunFam" id="3.30.1440.10:FF:000001">
    <property type="entry name" value="50S ribosomal protein L5"/>
    <property type="match status" value="1"/>
</dbReference>
<dbReference type="Gene3D" id="3.30.1440.10">
    <property type="match status" value="1"/>
</dbReference>
<dbReference type="HAMAP" id="MF_01333_B">
    <property type="entry name" value="Ribosomal_uL5_B"/>
    <property type="match status" value="1"/>
</dbReference>
<dbReference type="InterPro" id="IPR002132">
    <property type="entry name" value="Ribosomal_uL5"/>
</dbReference>
<dbReference type="InterPro" id="IPR020930">
    <property type="entry name" value="Ribosomal_uL5_bac-type"/>
</dbReference>
<dbReference type="InterPro" id="IPR031309">
    <property type="entry name" value="Ribosomal_uL5_C"/>
</dbReference>
<dbReference type="InterPro" id="IPR022803">
    <property type="entry name" value="Ribosomal_uL5_dom_sf"/>
</dbReference>
<dbReference type="InterPro" id="IPR031310">
    <property type="entry name" value="Ribosomal_uL5_N"/>
</dbReference>
<dbReference type="NCBIfam" id="NF000585">
    <property type="entry name" value="PRK00010.1"/>
    <property type="match status" value="1"/>
</dbReference>
<dbReference type="PANTHER" id="PTHR11994">
    <property type="entry name" value="60S RIBOSOMAL PROTEIN L11-RELATED"/>
    <property type="match status" value="1"/>
</dbReference>
<dbReference type="Pfam" id="PF00281">
    <property type="entry name" value="Ribosomal_L5"/>
    <property type="match status" value="1"/>
</dbReference>
<dbReference type="Pfam" id="PF00673">
    <property type="entry name" value="Ribosomal_L5_C"/>
    <property type="match status" value="1"/>
</dbReference>
<dbReference type="PIRSF" id="PIRSF002161">
    <property type="entry name" value="Ribosomal_L5"/>
    <property type="match status" value="1"/>
</dbReference>
<dbReference type="SUPFAM" id="SSF55282">
    <property type="entry name" value="RL5-like"/>
    <property type="match status" value="1"/>
</dbReference>
<accession>A4QBJ6</accession>